<dbReference type="EC" id="2.7.7.3" evidence="1"/>
<dbReference type="EMBL" id="CP000606">
    <property type="protein sequence ID" value="ABO25558.1"/>
    <property type="molecule type" value="Genomic_DNA"/>
</dbReference>
<dbReference type="RefSeq" id="WP_011867486.1">
    <property type="nucleotide sequence ID" value="NC_009092.1"/>
</dbReference>
<dbReference type="SMR" id="A3QJB0"/>
<dbReference type="STRING" id="323850.Shew_3692"/>
<dbReference type="KEGG" id="slo:Shew_3692"/>
<dbReference type="eggNOG" id="COG0669">
    <property type="taxonomic scope" value="Bacteria"/>
</dbReference>
<dbReference type="HOGENOM" id="CLU_100149_0_1_6"/>
<dbReference type="OrthoDB" id="9806661at2"/>
<dbReference type="UniPathway" id="UPA00241">
    <property type="reaction ID" value="UER00355"/>
</dbReference>
<dbReference type="Proteomes" id="UP000001558">
    <property type="component" value="Chromosome"/>
</dbReference>
<dbReference type="GO" id="GO:0005737">
    <property type="term" value="C:cytoplasm"/>
    <property type="evidence" value="ECO:0007669"/>
    <property type="project" value="UniProtKB-SubCell"/>
</dbReference>
<dbReference type="GO" id="GO:0005524">
    <property type="term" value="F:ATP binding"/>
    <property type="evidence" value="ECO:0007669"/>
    <property type="project" value="UniProtKB-KW"/>
</dbReference>
<dbReference type="GO" id="GO:0004595">
    <property type="term" value="F:pantetheine-phosphate adenylyltransferase activity"/>
    <property type="evidence" value="ECO:0007669"/>
    <property type="project" value="UniProtKB-UniRule"/>
</dbReference>
<dbReference type="GO" id="GO:0015937">
    <property type="term" value="P:coenzyme A biosynthetic process"/>
    <property type="evidence" value="ECO:0007669"/>
    <property type="project" value="UniProtKB-UniRule"/>
</dbReference>
<dbReference type="CDD" id="cd02163">
    <property type="entry name" value="PPAT"/>
    <property type="match status" value="1"/>
</dbReference>
<dbReference type="FunFam" id="3.40.50.620:FF:000012">
    <property type="entry name" value="Phosphopantetheine adenylyltransferase"/>
    <property type="match status" value="1"/>
</dbReference>
<dbReference type="Gene3D" id="3.40.50.620">
    <property type="entry name" value="HUPs"/>
    <property type="match status" value="1"/>
</dbReference>
<dbReference type="HAMAP" id="MF_00151">
    <property type="entry name" value="PPAT_bact"/>
    <property type="match status" value="1"/>
</dbReference>
<dbReference type="InterPro" id="IPR004821">
    <property type="entry name" value="Cyt_trans-like"/>
</dbReference>
<dbReference type="InterPro" id="IPR001980">
    <property type="entry name" value="PPAT"/>
</dbReference>
<dbReference type="InterPro" id="IPR014729">
    <property type="entry name" value="Rossmann-like_a/b/a_fold"/>
</dbReference>
<dbReference type="NCBIfam" id="TIGR01510">
    <property type="entry name" value="coaD_prev_kdtB"/>
    <property type="match status" value="1"/>
</dbReference>
<dbReference type="NCBIfam" id="TIGR00125">
    <property type="entry name" value="cyt_tran_rel"/>
    <property type="match status" value="1"/>
</dbReference>
<dbReference type="PANTHER" id="PTHR21342">
    <property type="entry name" value="PHOSPHOPANTETHEINE ADENYLYLTRANSFERASE"/>
    <property type="match status" value="1"/>
</dbReference>
<dbReference type="PANTHER" id="PTHR21342:SF1">
    <property type="entry name" value="PHOSPHOPANTETHEINE ADENYLYLTRANSFERASE"/>
    <property type="match status" value="1"/>
</dbReference>
<dbReference type="Pfam" id="PF01467">
    <property type="entry name" value="CTP_transf_like"/>
    <property type="match status" value="1"/>
</dbReference>
<dbReference type="PRINTS" id="PR01020">
    <property type="entry name" value="LPSBIOSNTHSS"/>
</dbReference>
<dbReference type="SUPFAM" id="SSF52374">
    <property type="entry name" value="Nucleotidylyl transferase"/>
    <property type="match status" value="1"/>
</dbReference>
<proteinExistence type="inferred from homology"/>
<keyword id="KW-0067">ATP-binding</keyword>
<keyword id="KW-0173">Coenzyme A biosynthesis</keyword>
<keyword id="KW-0963">Cytoplasm</keyword>
<keyword id="KW-0460">Magnesium</keyword>
<keyword id="KW-0547">Nucleotide-binding</keyword>
<keyword id="KW-0548">Nucleotidyltransferase</keyword>
<keyword id="KW-1185">Reference proteome</keyword>
<keyword id="KW-0808">Transferase</keyword>
<comment type="function">
    <text evidence="1">Reversibly transfers an adenylyl group from ATP to 4'-phosphopantetheine, yielding dephospho-CoA (dPCoA) and pyrophosphate.</text>
</comment>
<comment type="catalytic activity">
    <reaction evidence="1">
        <text>(R)-4'-phosphopantetheine + ATP + H(+) = 3'-dephospho-CoA + diphosphate</text>
        <dbReference type="Rhea" id="RHEA:19801"/>
        <dbReference type="ChEBI" id="CHEBI:15378"/>
        <dbReference type="ChEBI" id="CHEBI:30616"/>
        <dbReference type="ChEBI" id="CHEBI:33019"/>
        <dbReference type="ChEBI" id="CHEBI:57328"/>
        <dbReference type="ChEBI" id="CHEBI:61723"/>
        <dbReference type="EC" id="2.7.7.3"/>
    </reaction>
</comment>
<comment type="cofactor">
    <cofactor evidence="1">
        <name>Mg(2+)</name>
        <dbReference type="ChEBI" id="CHEBI:18420"/>
    </cofactor>
</comment>
<comment type="pathway">
    <text evidence="1">Cofactor biosynthesis; coenzyme A biosynthesis; CoA from (R)-pantothenate: step 4/5.</text>
</comment>
<comment type="subunit">
    <text evidence="1">Homohexamer.</text>
</comment>
<comment type="subcellular location">
    <subcellularLocation>
        <location evidence="1">Cytoplasm</location>
    </subcellularLocation>
</comment>
<comment type="similarity">
    <text evidence="1">Belongs to the bacterial CoaD family.</text>
</comment>
<organism>
    <name type="scientific">Shewanella loihica (strain ATCC BAA-1088 / PV-4)</name>
    <dbReference type="NCBI Taxonomy" id="323850"/>
    <lineage>
        <taxon>Bacteria</taxon>
        <taxon>Pseudomonadati</taxon>
        <taxon>Pseudomonadota</taxon>
        <taxon>Gammaproteobacteria</taxon>
        <taxon>Alteromonadales</taxon>
        <taxon>Shewanellaceae</taxon>
        <taxon>Shewanella</taxon>
    </lineage>
</organism>
<reference key="1">
    <citation type="submission" date="2007-03" db="EMBL/GenBank/DDBJ databases">
        <title>Complete sequence of Shewanella loihica PV-4.</title>
        <authorList>
            <consortium name="US DOE Joint Genome Institute"/>
            <person name="Copeland A."/>
            <person name="Lucas S."/>
            <person name="Lapidus A."/>
            <person name="Barry K."/>
            <person name="Detter J.C."/>
            <person name="Glavina del Rio T."/>
            <person name="Hammon N."/>
            <person name="Israni S."/>
            <person name="Dalin E."/>
            <person name="Tice H."/>
            <person name="Pitluck S."/>
            <person name="Chain P."/>
            <person name="Malfatti S."/>
            <person name="Shin M."/>
            <person name="Vergez L."/>
            <person name="Schmutz J."/>
            <person name="Larimer F."/>
            <person name="Land M."/>
            <person name="Hauser L."/>
            <person name="Kyrpides N."/>
            <person name="Mikhailova N."/>
            <person name="Romine M.F."/>
            <person name="Serres G."/>
            <person name="Fredrickson J."/>
            <person name="Tiedje J."/>
            <person name="Richardson P."/>
        </authorList>
    </citation>
    <scope>NUCLEOTIDE SEQUENCE [LARGE SCALE GENOMIC DNA]</scope>
    <source>
        <strain>ATCC BAA-1088 / PV-4</strain>
    </source>
</reference>
<gene>
    <name evidence="1" type="primary">coaD</name>
    <name type="ordered locus">Shew_3692</name>
</gene>
<accession>A3QJB0</accession>
<protein>
    <recommendedName>
        <fullName evidence="1">Phosphopantetheine adenylyltransferase</fullName>
        <ecNumber evidence="1">2.7.7.3</ecNumber>
    </recommendedName>
    <alternativeName>
        <fullName evidence="1">Dephospho-CoA pyrophosphorylase</fullName>
    </alternativeName>
    <alternativeName>
        <fullName evidence="1">Pantetheine-phosphate adenylyltransferase</fullName>
        <shortName evidence="1">PPAT</shortName>
    </alternativeName>
</protein>
<evidence type="ECO:0000255" key="1">
    <source>
        <dbReference type="HAMAP-Rule" id="MF_00151"/>
    </source>
</evidence>
<sequence length="158" mass="17582">MHTKAIYPGTFDPVTNGHTDLIERAAKLFKQVVIGIAANPSKQPRFSLEERVKLVKRVTEHLDNVEVVGFSGLLVDFAKEQNASVLVRGLRAVSDFEYEFQLANMNRRLSADLESVFLTPAEENSFISSTLVKEVALHGGDVSQFVHEEVAKALQKKD</sequence>
<name>COAD_SHELP</name>
<feature type="chain" id="PRO_1000011232" description="Phosphopantetheine adenylyltransferase">
    <location>
        <begin position="1"/>
        <end position="158"/>
    </location>
</feature>
<feature type="binding site" evidence="1">
    <location>
        <begin position="10"/>
        <end position="11"/>
    </location>
    <ligand>
        <name>ATP</name>
        <dbReference type="ChEBI" id="CHEBI:30616"/>
    </ligand>
</feature>
<feature type="binding site" evidence="1">
    <location>
        <position position="10"/>
    </location>
    <ligand>
        <name>substrate</name>
    </ligand>
</feature>
<feature type="binding site" evidence="1">
    <location>
        <position position="18"/>
    </location>
    <ligand>
        <name>ATP</name>
        <dbReference type="ChEBI" id="CHEBI:30616"/>
    </ligand>
</feature>
<feature type="binding site" evidence="1">
    <location>
        <position position="42"/>
    </location>
    <ligand>
        <name>substrate</name>
    </ligand>
</feature>
<feature type="binding site" evidence="1">
    <location>
        <position position="74"/>
    </location>
    <ligand>
        <name>substrate</name>
    </ligand>
</feature>
<feature type="binding site" evidence="1">
    <location>
        <position position="88"/>
    </location>
    <ligand>
        <name>substrate</name>
    </ligand>
</feature>
<feature type="binding site" evidence="1">
    <location>
        <begin position="89"/>
        <end position="91"/>
    </location>
    <ligand>
        <name>ATP</name>
        <dbReference type="ChEBI" id="CHEBI:30616"/>
    </ligand>
</feature>
<feature type="binding site" evidence="1">
    <location>
        <position position="99"/>
    </location>
    <ligand>
        <name>ATP</name>
        <dbReference type="ChEBI" id="CHEBI:30616"/>
    </ligand>
</feature>
<feature type="binding site" evidence="1">
    <location>
        <begin position="124"/>
        <end position="130"/>
    </location>
    <ligand>
        <name>ATP</name>
        <dbReference type="ChEBI" id="CHEBI:30616"/>
    </ligand>
</feature>
<feature type="site" description="Transition state stabilizer" evidence="1">
    <location>
        <position position="18"/>
    </location>
</feature>